<organism>
    <name type="scientific">Mus musculus</name>
    <name type="common">Mouse</name>
    <dbReference type="NCBI Taxonomy" id="10090"/>
    <lineage>
        <taxon>Eukaryota</taxon>
        <taxon>Metazoa</taxon>
        <taxon>Chordata</taxon>
        <taxon>Craniata</taxon>
        <taxon>Vertebrata</taxon>
        <taxon>Euteleostomi</taxon>
        <taxon>Mammalia</taxon>
        <taxon>Eutheria</taxon>
        <taxon>Euarchontoglires</taxon>
        <taxon>Glires</taxon>
        <taxon>Rodentia</taxon>
        <taxon>Myomorpha</taxon>
        <taxon>Muroidea</taxon>
        <taxon>Muridae</taxon>
        <taxon>Murinae</taxon>
        <taxon>Mus</taxon>
        <taxon>Mus</taxon>
    </lineage>
</organism>
<comment type="function">
    <text evidence="2 5 6">Plays a specialized role in the generation of left-right asymmetry during embryogenesis (PubMed:26437028). May act as a negative regulator of the NOTCH-signaling pathway. Cleaves alpha-1-antitrypsin (By similarity).</text>
</comment>
<comment type="cofactor">
    <cofactor evidence="1">
        <name>Zn(2+)</name>
        <dbReference type="ChEBI" id="CHEBI:29105"/>
    </cofactor>
    <text evidence="1">Binds 1 zinc ion per subunit.</text>
</comment>
<comment type="cofactor">
    <cofactor evidence="1">
        <name>Ca(2+)</name>
        <dbReference type="ChEBI" id="CHEBI:29108"/>
    </cofactor>
</comment>
<comment type="subcellular location">
    <subcellularLocation>
        <location evidence="7">Secreted</location>
    </subcellularLocation>
</comment>
<comment type="domain">
    <text>The conserved cysteine present in the cysteine-switch motif binds the catalytic zinc ion, thus inhibiting the enzyme. The dissociation of the cysteine from the zinc ion upon the activation-peptide release activates the enzyme.</text>
</comment>
<comment type="PTM">
    <text evidence="1">The precursor is cleaved by a furin endopeptidase.</text>
</comment>
<comment type="similarity">
    <text evidence="7">Belongs to the peptidase M10A family.</text>
</comment>
<dbReference type="EC" id="3.4.24.-"/>
<dbReference type="EMBL" id="AY124569">
    <property type="protein sequence ID" value="AAM94032.1"/>
    <property type="molecule type" value="mRNA"/>
</dbReference>
<dbReference type="EMBL" id="AF507967">
    <property type="protein sequence ID" value="AAN09805.1"/>
    <property type="molecule type" value="mRNA"/>
</dbReference>
<dbReference type="CCDS" id="CCDS21933.1"/>
<dbReference type="RefSeq" id="NP_694423.1">
    <property type="nucleotide sequence ID" value="NM_152944.1"/>
</dbReference>
<dbReference type="SMR" id="Q8K3F2"/>
<dbReference type="STRING" id="10090.ENSMUSP00000033278"/>
<dbReference type="MEROPS" id="M10.026"/>
<dbReference type="GlyCosmos" id="Q8K3F2">
    <property type="glycosylation" value="1 site, No reported glycans"/>
</dbReference>
<dbReference type="GlyGen" id="Q8K3F2">
    <property type="glycosylation" value="3 sites"/>
</dbReference>
<dbReference type="PhosphoSitePlus" id="Q8K3F2"/>
<dbReference type="PaxDb" id="10090-ENSMUSP00000033278"/>
<dbReference type="ProteomicsDB" id="291373"/>
<dbReference type="Antibodypedia" id="19175">
    <property type="antibodies" value="92 antibodies from 26 providers"/>
</dbReference>
<dbReference type="DNASU" id="214766"/>
<dbReference type="Ensembl" id="ENSMUST00000033278.8">
    <property type="protein sequence ID" value="ENSMUSP00000033278.2"/>
    <property type="gene ID" value="ENSMUSG00000030981.10"/>
</dbReference>
<dbReference type="GeneID" id="214766"/>
<dbReference type="KEGG" id="mmu:214766"/>
<dbReference type="UCSC" id="uc009kdd.1">
    <property type="organism name" value="mouse"/>
</dbReference>
<dbReference type="AGR" id="MGI:2664387"/>
<dbReference type="CTD" id="118856"/>
<dbReference type="MGI" id="MGI:2664387">
    <property type="gene designation" value="Mmp21"/>
</dbReference>
<dbReference type="VEuPathDB" id="HostDB:ENSMUSG00000030981"/>
<dbReference type="eggNOG" id="KOG1565">
    <property type="taxonomic scope" value="Eukaryota"/>
</dbReference>
<dbReference type="GeneTree" id="ENSGT00940000159140"/>
<dbReference type="HOGENOM" id="CLU_015489_9_0_1"/>
<dbReference type="InParanoid" id="Q8K3F2"/>
<dbReference type="OMA" id="CWLAAPW"/>
<dbReference type="OrthoDB" id="406838at2759"/>
<dbReference type="PhylomeDB" id="Q8K3F2"/>
<dbReference type="TreeFam" id="TF315428"/>
<dbReference type="BioGRID-ORCS" id="214766">
    <property type="hits" value="0 hits in 77 CRISPR screens"/>
</dbReference>
<dbReference type="PRO" id="PR:Q8K3F2"/>
<dbReference type="Proteomes" id="UP000000589">
    <property type="component" value="Chromosome 7"/>
</dbReference>
<dbReference type="RNAct" id="Q8K3F2">
    <property type="molecule type" value="protein"/>
</dbReference>
<dbReference type="Bgee" id="ENSMUSG00000030981">
    <property type="expression patterns" value="Expressed in mesodermal cell in embryo and 2 other cell types or tissues"/>
</dbReference>
<dbReference type="ExpressionAtlas" id="Q8K3F2">
    <property type="expression patterns" value="baseline and differential"/>
</dbReference>
<dbReference type="GO" id="GO:0031012">
    <property type="term" value="C:extracellular matrix"/>
    <property type="evidence" value="ECO:0007669"/>
    <property type="project" value="InterPro"/>
</dbReference>
<dbReference type="GO" id="GO:0005576">
    <property type="term" value="C:extracellular region"/>
    <property type="evidence" value="ECO:0007669"/>
    <property type="project" value="UniProtKB-SubCell"/>
</dbReference>
<dbReference type="GO" id="GO:0004222">
    <property type="term" value="F:metalloendopeptidase activity"/>
    <property type="evidence" value="ECO:0007669"/>
    <property type="project" value="InterPro"/>
</dbReference>
<dbReference type="GO" id="GO:0008237">
    <property type="term" value="F:metallopeptidase activity"/>
    <property type="evidence" value="ECO:0000266"/>
    <property type="project" value="MGI"/>
</dbReference>
<dbReference type="GO" id="GO:0008270">
    <property type="term" value="F:zinc ion binding"/>
    <property type="evidence" value="ECO:0007669"/>
    <property type="project" value="InterPro"/>
</dbReference>
<dbReference type="GO" id="GO:0060976">
    <property type="term" value="P:coronary vasculature development"/>
    <property type="evidence" value="ECO:0000315"/>
    <property type="project" value="MGI"/>
</dbReference>
<dbReference type="GO" id="GO:0061371">
    <property type="term" value="P:determination of heart left/right asymmetry"/>
    <property type="evidence" value="ECO:0000315"/>
    <property type="project" value="UniProtKB"/>
</dbReference>
<dbReference type="GO" id="GO:0007368">
    <property type="term" value="P:determination of left/right symmetry"/>
    <property type="evidence" value="ECO:0000315"/>
    <property type="project" value="UniProtKB"/>
</dbReference>
<dbReference type="GO" id="GO:0002244">
    <property type="term" value="P:hematopoietic progenitor cell differentiation"/>
    <property type="evidence" value="ECO:0000316"/>
    <property type="project" value="MGI"/>
</dbReference>
<dbReference type="GO" id="GO:0006508">
    <property type="term" value="P:proteolysis"/>
    <property type="evidence" value="ECO:0007669"/>
    <property type="project" value="UniProtKB-KW"/>
</dbReference>
<dbReference type="CDD" id="cd00094">
    <property type="entry name" value="HX"/>
    <property type="match status" value="1"/>
</dbReference>
<dbReference type="CDD" id="cd04278">
    <property type="entry name" value="ZnMc_MMP"/>
    <property type="match status" value="1"/>
</dbReference>
<dbReference type="FunFam" id="2.110.10.10:FF:000012">
    <property type="entry name" value="Matrix metallopeptidase 21"/>
    <property type="match status" value="1"/>
</dbReference>
<dbReference type="FunFam" id="2.110.10.10:FF:000015">
    <property type="entry name" value="Matrix metallopeptidase 21"/>
    <property type="match status" value="1"/>
</dbReference>
<dbReference type="FunFam" id="3.40.390.10:FF:000047">
    <property type="entry name" value="Matrix metallopeptidase 21"/>
    <property type="match status" value="1"/>
</dbReference>
<dbReference type="Gene3D" id="3.40.390.10">
    <property type="entry name" value="Collagenase (Catalytic Domain)"/>
    <property type="match status" value="1"/>
</dbReference>
<dbReference type="Gene3D" id="2.110.10.10">
    <property type="entry name" value="Hemopexin-like domain"/>
    <property type="match status" value="2"/>
</dbReference>
<dbReference type="InterPro" id="IPR000585">
    <property type="entry name" value="Hemopexin-like_dom"/>
</dbReference>
<dbReference type="InterPro" id="IPR036375">
    <property type="entry name" value="Hemopexin-like_dom_sf"/>
</dbReference>
<dbReference type="InterPro" id="IPR018487">
    <property type="entry name" value="Hemopexin-like_repeat"/>
</dbReference>
<dbReference type="InterPro" id="IPR033739">
    <property type="entry name" value="M10A_MMP"/>
</dbReference>
<dbReference type="InterPro" id="IPR024079">
    <property type="entry name" value="MetalloPept_cat_dom_sf"/>
</dbReference>
<dbReference type="InterPro" id="IPR001818">
    <property type="entry name" value="Pept_M10_metallopeptidase"/>
</dbReference>
<dbReference type="InterPro" id="IPR021190">
    <property type="entry name" value="Pept_M10A"/>
</dbReference>
<dbReference type="InterPro" id="IPR006026">
    <property type="entry name" value="Peptidase_Metallo"/>
</dbReference>
<dbReference type="InterPro" id="IPR002477">
    <property type="entry name" value="Peptidoglycan-bd-like"/>
</dbReference>
<dbReference type="InterPro" id="IPR036365">
    <property type="entry name" value="PGBD-like_sf"/>
</dbReference>
<dbReference type="PANTHER" id="PTHR10201">
    <property type="entry name" value="MATRIX METALLOPROTEINASE"/>
    <property type="match status" value="1"/>
</dbReference>
<dbReference type="PANTHER" id="PTHR10201:SF323">
    <property type="entry name" value="MATRIX METALLOPROTEINASE-21"/>
    <property type="match status" value="1"/>
</dbReference>
<dbReference type="Pfam" id="PF00045">
    <property type="entry name" value="Hemopexin"/>
    <property type="match status" value="3"/>
</dbReference>
<dbReference type="Pfam" id="PF00413">
    <property type="entry name" value="Peptidase_M10"/>
    <property type="match status" value="1"/>
</dbReference>
<dbReference type="Pfam" id="PF01471">
    <property type="entry name" value="PG_binding_1"/>
    <property type="match status" value="1"/>
</dbReference>
<dbReference type="PIRSF" id="PIRSF001191">
    <property type="entry name" value="Peptidase_M10A_matrix"/>
    <property type="match status" value="1"/>
</dbReference>
<dbReference type="PRINTS" id="PR00138">
    <property type="entry name" value="MATRIXIN"/>
</dbReference>
<dbReference type="SMART" id="SM00120">
    <property type="entry name" value="HX"/>
    <property type="match status" value="4"/>
</dbReference>
<dbReference type="SMART" id="SM00235">
    <property type="entry name" value="ZnMc"/>
    <property type="match status" value="1"/>
</dbReference>
<dbReference type="SUPFAM" id="SSF50923">
    <property type="entry name" value="Hemopexin-like domain"/>
    <property type="match status" value="1"/>
</dbReference>
<dbReference type="SUPFAM" id="SSF55486">
    <property type="entry name" value="Metalloproteases ('zincins'), catalytic domain"/>
    <property type="match status" value="1"/>
</dbReference>
<dbReference type="SUPFAM" id="SSF47090">
    <property type="entry name" value="PGBD-like"/>
    <property type="match status" value="1"/>
</dbReference>
<dbReference type="PROSITE" id="PS51642">
    <property type="entry name" value="HEMOPEXIN_2"/>
    <property type="match status" value="4"/>
</dbReference>
<dbReference type="PROSITE" id="PS00142">
    <property type="entry name" value="ZINC_PROTEASE"/>
    <property type="match status" value="1"/>
</dbReference>
<protein>
    <recommendedName>
        <fullName>Matrix metalloproteinase-21</fullName>
        <shortName>MMP-21</shortName>
        <ecNumber>3.4.24.-</ecNumber>
    </recommendedName>
</protein>
<feature type="signal peptide" evidence="3">
    <location>
        <begin position="1"/>
        <end position="24"/>
    </location>
</feature>
<feature type="propeptide" id="PRO_0000437089" evidence="1">
    <location>
        <begin position="25"/>
        <end position="143"/>
    </location>
</feature>
<feature type="chain" id="PRO_0000028841" description="Matrix metalloproteinase-21">
    <location>
        <begin position="144"/>
        <end position="568"/>
    </location>
</feature>
<feature type="repeat" description="Hemopexin 1">
    <location>
        <begin position="329"/>
        <end position="388"/>
    </location>
</feature>
<feature type="repeat" description="Hemopexin 2">
    <location>
        <begin position="390"/>
        <end position="446"/>
    </location>
</feature>
<feature type="repeat" description="Hemopexin 3">
    <location>
        <begin position="447"/>
        <end position="495"/>
    </location>
</feature>
<feature type="repeat" description="Hemopexin 4">
    <location>
        <begin position="502"/>
        <end position="558"/>
    </location>
</feature>
<feature type="short sequence motif" description="Cysteine switch" evidence="1">
    <location>
        <begin position="110"/>
        <end position="117"/>
    </location>
</feature>
<feature type="active site" evidence="4">
    <location>
        <position position="283"/>
    </location>
</feature>
<feature type="binding site" description="in inhibited form" evidence="1">
    <location>
        <position position="112"/>
    </location>
    <ligand>
        <name>Zn(2+)</name>
        <dbReference type="ChEBI" id="CHEBI:29105"/>
        <note>catalytic</note>
    </ligand>
</feature>
<feature type="binding site" evidence="4">
    <location>
        <position position="282"/>
    </location>
    <ligand>
        <name>Zn(2+)</name>
        <dbReference type="ChEBI" id="CHEBI:29105"/>
        <note>catalytic</note>
    </ligand>
</feature>
<feature type="binding site" evidence="4">
    <location>
        <position position="286"/>
    </location>
    <ligand>
        <name>Zn(2+)</name>
        <dbReference type="ChEBI" id="CHEBI:29105"/>
        <note>catalytic</note>
    </ligand>
</feature>
<feature type="binding site" evidence="4">
    <location>
        <position position="292"/>
    </location>
    <ligand>
        <name>Zn(2+)</name>
        <dbReference type="ChEBI" id="CHEBI:29105"/>
        <note>catalytic</note>
    </ligand>
</feature>
<feature type="glycosylation site" description="N-linked (GlcNAc...) asparagine" evidence="3">
    <location>
        <position position="371"/>
    </location>
</feature>
<feature type="disulfide bond" evidence="1">
    <location>
        <begin position="328"/>
        <end position="559"/>
    </location>
</feature>
<feature type="mutagenesis site" description="Miri mutant, animals exhibit visceral heterotaxy, with heart defects commonly associated with heterotaxy." evidence="6">
    <original>W</original>
    <variation>L</variation>
    <location>
        <position position="177"/>
    </location>
</feature>
<feature type="mutagenesis site" description="Embryos have congenital heart defects with transposition of the great artery, 61% exhibiting situs inversus or heterotaxy and 39% exhibiting situs solitus. This mutation corresponds to the pathological variant 'T-226' identified in humans." evidence="5">
    <original>I</original>
    <variation>T</variation>
    <location>
        <position position="225"/>
    </location>
</feature>
<feature type="mutagenesis site" description="Koli mutant, animals exhibit visceral heterotaxy, with heart defects commonly associated with heterotaxy." evidence="6">
    <original>Y</original>
    <variation>N</variation>
    <location>
        <position position="325"/>
    </location>
</feature>
<sequence>MLAASVLRLTLPLCWLVAPQPTQPERLFHSRDRSDLEPSPLSQAKPIADLHDAQSFLLKYGWSEIPSPKESAGVPVGFTLAQAVRRFQKANRLPASGELDSPTLAAMNKPRCGVPDTRLPPRAALPTPPALLTSLGLRPRARQKRFLQMLFPKPDGQQEDASDTGASRAFSKKTLTWRLVGDAYSSQLSGDEQRYIFRLAFRMWSEVTPLDFREDRTAPGTMVDIKLGFGRGRHLGCPRVFDGSGQEFAHAWRLGEIHFDDDEHFTPLSSDTGISLLKVAVHEIGHVLGLPHTYRVGSIMQPNYIPQEPAFELDWADRKAIQRLYGSCKGSFDTVFDWIRKERNQYGEVRVRFNTYFFRNSWYWLYENRNNRTRYGDPLQILTGWRGIPTQSIDAYVHVWSWGKDERYFFKGSQYWRYDSENDQAHTEDEQGRSYPKLISEGFPGIPSPLDTAFYDRRQQLIYFFKESLVFAFDVNRNQVLNSYPKKMSQVFPAIMPQNHPFRNLDSAYYSYAHNSIFFFKGNSYWKVVSDKDKQQNTRLPLNGLFPKKPVSEKWFDVCDVHTSTLNM</sequence>
<proteinExistence type="evidence at protein level"/>
<keyword id="KW-0106">Calcium</keyword>
<keyword id="KW-1015">Disulfide bond</keyword>
<keyword id="KW-0325">Glycoprotein</keyword>
<keyword id="KW-0378">Hydrolase</keyword>
<keyword id="KW-0479">Metal-binding</keyword>
<keyword id="KW-0482">Metalloprotease</keyword>
<keyword id="KW-0645">Protease</keyword>
<keyword id="KW-1185">Reference proteome</keyword>
<keyword id="KW-0677">Repeat</keyword>
<keyword id="KW-0964">Secreted</keyword>
<keyword id="KW-0732">Signal</keyword>
<keyword id="KW-0862">Zinc</keyword>
<keyword id="KW-0865">Zymogen</keyword>
<gene>
    <name type="primary">Mmp21</name>
</gene>
<evidence type="ECO:0000250" key="1"/>
<evidence type="ECO:0000250" key="2">
    <source>
        <dbReference type="UniProtKB" id="Q8N119"/>
    </source>
</evidence>
<evidence type="ECO:0000255" key="3"/>
<evidence type="ECO:0000255" key="4">
    <source>
        <dbReference type="PROSITE-ProRule" id="PRU10095"/>
    </source>
</evidence>
<evidence type="ECO:0000269" key="5">
    <source>
    </source>
</evidence>
<evidence type="ECO:0000269" key="6">
    <source>
    </source>
</evidence>
<evidence type="ECO:0000305" key="7"/>
<name>MMP21_MOUSE</name>
<accession>Q8K3F2</accession>
<reference key="1">
    <citation type="journal article" date="2003" name="Biochem. J.">
        <title>The structure and regulation of the human and mouse matrix metalloproteinase-21 gene and protein.</title>
        <authorList>
            <person name="Marchenko G.N."/>
            <person name="Marchenko N.D."/>
            <person name="Strongin A.Y."/>
        </authorList>
    </citation>
    <scope>NUCLEOTIDE SEQUENCE [MRNA]</scope>
    <source>
        <strain>BALB/cJ</strain>
        <tissue>Brain</tissue>
    </source>
</reference>
<reference key="2">
    <citation type="submission" date="2002-04" db="EMBL/GenBank/DDBJ databases">
        <title>Mouse MMP-21, a novel matrix metalloproteinase.</title>
        <authorList>
            <person name="Lopez-Otin C."/>
            <person name="Pendas A.M."/>
            <person name="Llano E."/>
        </authorList>
    </citation>
    <scope>NUCLEOTIDE SEQUENCE [MRNA]</scope>
    <source>
        <strain>A/J</strain>
    </source>
</reference>
<reference key="3">
    <citation type="journal article" date="2015" name="Nat. Genet.">
        <title>MMP21 is mutated in human heterotaxy and is required for normal left-right asymmetry in vertebrates.</title>
        <authorList>
            <person name="Guimier A."/>
            <person name="Gabriel G.C."/>
            <person name="Bajolle F."/>
            <person name="Tsang M."/>
            <person name="Liu H."/>
            <person name="Noll A."/>
            <person name="Schwartz M."/>
            <person name="El Malti R."/>
            <person name="Smith L.D."/>
            <person name="Klena N.T."/>
            <person name="Jimenez G."/>
            <person name="Miller N.A."/>
            <person name="Oufadem M."/>
            <person name="Moreau de Bellaing A."/>
            <person name="Yagi H."/>
            <person name="Saunders C.J."/>
            <person name="Baker C.N."/>
            <person name="Di Filippo S."/>
            <person name="Peterson K.A."/>
            <person name="Thiffault I."/>
            <person name="Bole-Feysot C."/>
            <person name="Cooley L.D."/>
            <person name="Farrow E.G."/>
            <person name="Masson C."/>
            <person name="Schoen P."/>
            <person name="Deleuze J.F."/>
            <person name="Nitschke P."/>
            <person name="Lyonnet S."/>
            <person name="de Pontual L."/>
            <person name="Murray S.A."/>
            <person name="Bonnet D."/>
            <person name="Kingsmore S.F."/>
            <person name="Amiel J."/>
            <person name="Bouvagnet P."/>
            <person name="Lo C.W."/>
            <person name="Gordon C.T."/>
        </authorList>
    </citation>
    <scope>FUNCTION</scope>
    <scope>MUTAGENESIS OF ILE-225</scope>
</reference>
<reference key="4">
    <citation type="journal article" date="2015" name="Nat. Genet.">
        <title>Discovery of four recessive developmental disorders using probabilistic genotype and phenotype matching among 4,125 families.</title>
        <authorList>
            <consortium name="DDD study"/>
            <person name="Akawi N."/>
            <person name="McRae J."/>
            <person name="Ansari M."/>
            <person name="Balasubramanian M."/>
            <person name="Blyth M."/>
            <person name="Brady A.F."/>
            <person name="Clayton S."/>
            <person name="Cole T."/>
            <person name="Deshpande C."/>
            <person name="Fitzgerald T.W."/>
            <person name="Foulds N."/>
            <person name="Francis R."/>
            <person name="Gabriel G."/>
            <person name="Gerety S.S."/>
            <person name="Goodship J."/>
            <person name="Hobson E."/>
            <person name="Jones W.D."/>
            <person name="Joss S."/>
            <person name="King D."/>
            <person name="Klena N."/>
            <person name="Kumar A."/>
            <person name="Lees M."/>
            <person name="Lelliott C."/>
            <person name="Lord J."/>
            <person name="McMullan D."/>
            <person name="O'Regan M."/>
            <person name="Osio D."/>
            <person name="Piombo V."/>
            <person name="Prigmore E."/>
            <person name="Rajan D."/>
            <person name="Rosser E."/>
            <person name="Sifrim A."/>
            <person name="Smith A."/>
            <person name="Swaminathan G.J."/>
            <person name="Turnpenny P."/>
            <person name="Whitworth J."/>
            <person name="Wright C.F."/>
            <person name="Firth H.V."/>
            <person name="Barrett J.C."/>
            <person name="Lo C.W."/>
            <person name="FitzPatrick D.R."/>
            <person name="Hurles M.E."/>
        </authorList>
    </citation>
    <scope>FUNCTION</scope>
    <scope>MUTAGENESIS OF TRP-177 AND TYR-325</scope>
</reference>